<accession>Q9T1Q7</accession>
<proteinExistence type="predicted"/>
<organismHost>
    <name type="scientific">Escherichia coli</name>
    <dbReference type="NCBI Taxonomy" id="562"/>
</organismHost>
<sequence>MKTFTPRPYQHLIINHLLDIKRSNVWAGMGMGKTAATLTALENLYLSGSETKPTLVLAPLRVAQSTWPDEALKWSHLRNIEVQPIIGSAKARIAALKNTHASVFTVNYDNLVWLVDILGDTWPFGTIIADESTRLKSFRLRKGGKRTAALAKIAHKSVHRWVNLTGTPSPNGLMDLWGQAWFVDQGERLGRTYNAFTSRWFKRIQLPGQQWSRFEPLGFAHLQIPLALSDVTLSLDAADWFDIDEPIHNVINVELPAKARAHYHAMEKELFLELGESAIEALNAAAKTIKILQIASGAIYSDDNRNWTEIHDAKIQALESIVNESGGTPVLVAYHWKHDLERLLKAFPKGKNLDANPRTLTDWNNGKIPLLFAHPASCGHGLNLQDGGNILVFFSHWWDLEQYQQIIERIGPTRQAQAGHNRPVFIHHIVAKDTLDEVVMERRNSKRAIQDLLLEAMKRK</sequence>
<organism>
    <name type="scientific">Acyrthosiphon pisum secondary endosymbiont phage 1</name>
    <name type="common">Bacteriophage APSE-1</name>
    <dbReference type="NCBI Taxonomy" id="2682836"/>
    <lineage>
        <taxon>Viruses</taxon>
        <taxon>Duplodnaviria</taxon>
        <taxon>Heunggongvirae</taxon>
        <taxon>Uroviricota</taxon>
        <taxon>Caudoviricetes</taxon>
        <taxon>Sendosyvirus</taxon>
        <taxon>Sendosyvirus APSE1</taxon>
    </lineage>
</organism>
<feature type="chain" id="PRO_0000077870" description="Putative protein p41">
    <location>
        <begin position="1"/>
        <end position="460"/>
    </location>
</feature>
<feature type="domain" description="Helicase ATP-binding" evidence="1">
    <location>
        <begin position="14"/>
        <end position="186"/>
    </location>
</feature>
<evidence type="ECO:0000255" key="1">
    <source>
        <dbReference type="PROSITE-ProRule" id="PRU00541"/>
    </source>
</evidence>
<gene>
    <name type="primary">41</name>
</gene>
<dbReference type="EMBL" id="AF157835">
    <property type="protein sequence ID" value="AAF03984.1"/>
    <property type="molecule type" value="Genomic_DNA"/>
</dbReference>
<dbReference type="RefSeq" id="NP_051002.1">
    <property type="nucleotide sequence ID" value="NC_000935.1"/>
</dbReference>
<dbReference type="SMR" id="Q9T1Q7"/>
<dbReference type="KEGG" id="vg:1262335"/>
<dbReference type="Proteomes" id="UP000000853">
    <property type="component" value="Genome"/>
</dbReference>
<dbReference type="GO" id="GO:0005524">
    <property type="term" value="F:ATP binding"/>
    <property type="evidence" value="ECO:0007669"/>
    <property type="project" value="InterPro"/>
</dbReference>
<dbReference type="Gene3D" id="3.40.50.300">
    <property type="entry name" value="P-loop containing nucleotide triphosphate hydrolases"/>
    <property type="match status" value="1"/>
</dbReference>
<dbReference type="Gene3D" id="3.40.50.10810">
    <property type="entry name" value="Tandem AAA-ATPase domain"/>
    <property type="match status" value="1"/>
</dbReference>
<dbReference type="InterPro" id="IPR014001">
    <property type="entry name" value="Helicase_ATP-bd"/>
</dbReference>
<dbReference type="InterPro" id="IPR027417">
    <property type="entry name" value="P-loop_NTPase"/>
</dbReference>
<dbReference type="InterPro" id="IPR038718">
    <property type="entry name" value="SNF2-like_sf"/>
</dbReference>
<dbReference type="InterPro" id="IPR000330">
    <property type="entry name" value="SNF2_N"/>
</dbReference>
<dbReference type="PANTHER" id="PTHR10799">
    <property type="entry name" value="SNF2/RAD54 HELICASE FAMILY"/>
    <property type="match status" value="1"/>
</dbReference>
<dbReference type="Pfam" id="PF00176">
    <property type="entry name" value="SNF2-rel_dom"/>
    <property type="match status" value="1"/>
</dbReference>
<dbReference type="SMART" id="SM00487">
    <property type="entry name" value="DEXDc"/>
    <property type="match status" value="1"/>
</dbReference>
<dbReference type="SUPFAM" id="SSF52540">
    <property type="entry name" value="P-loop containing nucleoside triphosphate hydrolases"/>
    <property type="match status" value="2"/>
</dbReference>
<dbReference type="PROSITE" id="PS51192">
    <property type="entry name" value="HELICASE_ATP_BIND_1"/>
    <property type="match status" value="1"/>
</dbReference>
<protein>
    <recommendedName>
        <fullName>Putative protein p41</fullName>
    </recommendedName>
</protein>
<name>VP41_BPAPS</name>
<keyword id="KW-1185">Reference proteome</keyword>
<reference key="1">
    <citation type="journal article" date="1999" name="Virology">
        <title>Isolation and characterization of APSE-1, a bacteriophage infecting the secondary endosymbiont of acyrthosiphon pisum.</title>
        <authorList>
            <person name="van der Wilk F."/>
            <person name="Dullemans A.M."/>
            <person name="Verbeek M."/>
            <person name="van den Heuvel J.F.J.M."/>
        </authorList>
    </citation>
    <scope>NUCLEOTIDE SEQUENCE [LARGE SCALE GENOMIC DNA]</scope>
</reference>